<organism>
    <name type="scientific">Homo sapiens</name>
    <name type="common">Human</name>
    <dbReference type="NCBI Taxonomy" id="9606"/>
    <lineage>
        <taxon>Eukaryota</taxon>
        <taxon>Metazoa</taxon>
        <taxon>Chordata</taxon>
        <taxon>Craniata</taxon>
        <taxon>Vertebrata</taxon>
        <taxon>Euteleostomi</taxon>
        <taxon>Mammalia</taxon>
        <taxon>Eutheria</taxon>
        <taxon>Euarchontoglires</taxon>
        <taxon>Primates</taxon>
        <taxon>Haplorrhini</taxon>
        <taxon>Catarrhini</taxon>
        <taxon>Hominidae</taxon>
        <taxon>Homo</taxon>
    </lineage>
</organism>
<evidence type="ECO:0000255" key="1"/>
<evidence type="ECO:0000256" key="2">
    <source>
        <dbReference type="SAM" id="MobiDB-lite"/>
    </source>
</evidence>
<evidence type="ECO:0000269" key="3">
    <source>
    </source>
</evidence>
<evidence type="ECO:0000269" key="4">
    <source>
    </source>
</evidence>
<evidence type="ECO:0000269" key="5">
    <source>
    </source>
</evidence>
<evidence type="ECO:0000269" key="6">
    <source>
    </source>
</evidence>
<evidence type="ECO:0000303" key="7">
    <source>
    </source>
</evidence>
<evidence type="ECO:0000305" key="8"/>
<evidence type="ECO:0007744" key="9">
    <source>
    </source>
</evidence>
<sequence length="1183" mass="133024">MEEFDLVKTLHKTSSSVGSDENSLHSLGLNLNTDRSSPHLSTNGVSSFSGKTRPSVIQGTVEVLTSLMQELQNSGKTDSELWKNCETRWLQLFNLVEKQCQEQIVAQQEQFHNQIQHIQEEIKNLVKLQTSSASLASCEGNSSNKQVSSESQMGFFSLSSERNESVIHYPESTEPEIQQEMSTSQPDCNVDSCSVSSGYGTFCISELNLYKSKDPKEFMEHIDVPKGQYVAPAVPAESLVDGVKNENFYIQTPEECHVSLKEDVSISPGEFEHNFLGENKVSEVYSGKTNSNAITSWAQKLKQNQPKRAHVEDGGSRSKQGNEQSKKTPIEKSDFAAATHPRAFYLSKPDETPNAWMSDSGTGLTYWKLEEKDMHHSLPETLEKTFISLSSTDVSPNQSNTSNEMKLPSLKDIYYKKQRENKQLPERNLTSASNPNHPPEVLTLDPTLHMKPKQQISGIQPHGLPNALDDRISFSPDSVLEPSMSSPSDIDSFSQASNVTSQLPGFPKYPSHTKASPVDSWKNQTFQNESRTSSTFPSVYTITSNDISVNTVDEENTVMVASASVSQSQLPGTANSVPECISLTSLEDPVILSKIRQNLKEKHARHIADLRAYYESEINSLKQKLEAKEISGVEDWKITNQILVDRCGQLDSALHEATSRVRTLENKNNLLEIEVNDLRERFSAASSASKILQERIEEMRTSSKEKDNTIIRLKSRLQDLEEAFENAYKLSDDKEAQLKQENKMFQDLLGEYESLGKEHRRVKDALNTTENKLLDAYTQISDLKRMISKLEAQVKQVEHENMLSLRHNSRIHVRPSRANTLATSDVSRRKWLIPGAEYSIFTGQPLDTQDSNVDNQLEETCSLGHRSPLEKDSSPGSSSTSLLIKKQRETSDTPIMRALKELDEGKIFKNWGTQTEKEDTSNINPRQTETSVNASRSPEKCAQQRQKRLNSASQRSSSLPPSNRKSSTPTKREIMLTPVTVAYSPKRSPKENLSPGFSHLLSKNESSPIRFDILLDDLDTVPVSTLQRTNPRKQLQFLPLDDSEEKTYSEKATDNHVNHSSCPEPVPNGVKKVSVRTAWEKNKSVSYEQCKPVSVTPQGNDFEYTAKIRTLAETERFFDELTKEKDQIEAALSRMPSPGGRITLQTRLNQEALEDRLERINRELGSVRMTLKKFHVLRTSANL</sequence>
<keyword id="KW-0025">Alternative splicing</keyword>
<keyword id="KW-0175">Coiled coil</keyword>
<keyword id="KW-0963">Cytoplasm</keyword>
<keyword id="KW-0206">Cytoskeleton</keyword>
<keyword id="KW-0333">Golgi apparatus</keyword>
<keyword id="KW-1017">Isopeptide bond</keyword>
<keyword id="KW-0472">Membrane</keyword>
<keyword id="KW-0597">Phosphoprotein</keyword>
<keyword id="KW-1267">Proteomics identification</keyword>
<keyword id="KW-1185">Reference proteome</keyword>
<keyword id="KW-0832">Ubl conjugation</keyword>
<proteinExistence type="evidence at protein level"/>
<feature type="chain" id="PRO_0000096557" description="M-phase phosphoprotein 9">
    <location>
        <begin position="1"/>
        <end position="1183"/>
    </location>
</feature>
<feature type="region of interest" description="Disordered" evidence="2">
    <location>
        <begin position="28"/>
        <end position="52"/>
    </location>
</feature>
<feature type="region of interest" description="Disordered" evidence="2">
    <location>
        <begin position="300"/>
        <end position="334"/>
    </location>
</feature>
<feature type="region of interest" description="Required for its centrosomal localization" evidence="5">
    <location>
        <begin position="401"/>
        <end position="800"/>
    </location>
</feature>
<feature type="region of interest" description="Interaction with CEP97" evidence="5">
    <location>
        <begin position="451"/>
        <end position="500"/>
    </location>
</feature>
<feature type="region of interest" description="Disordered" evidence="2">
    <location>
        <begin position="472"/>
        <end position="495"/>
    </location>
</feature>
<feature type="region of interest" description="Interaction with KIF24" evidence="5">
    <location>
        <begin position="801"/>
        <end position="1031"/>
    </location>
</feature>
<feature type="region of interest" description="Disordered" evidence="2">
    <location>
        <begin position="863"/>
        <end position="894"/>
    </location>
</feature>
<feature type="region of interest" description="Disordered" evidence="2">
    <location>
        <begin position="910"/>
        <end position="999"/>
    </location>
</feature>
<feature type="coiled-coil region" evidence="1">
    <location>
        <begin position="609"/>
        <end position="804"/>
    </location>
</feature>
<feature type="coiled-coil region" evidence="1">
    <location>
        <begin position="1109"/>
        <end position="1174"/>
    </location>
</feature>
<feature type="compositionally biased region" description="Basic and acidic residues" evidence="2">
    <location>
        <begin position="324"/>
        <end position="334"/>
    </location>
</feature>
<feature type="compositionally biased region" description="Low complexity" evidence="2">
    <location>
        <begin position="483"/>
        <end position="495"/>
    </location>
</feature>
<feature type="compositionally biased region" description="Polar residues" evidence="2">
    <location>
        <begin position="921"/>
        <end position="936"/>
    </location>
</feature>
<feature type="compositionally biased region" description="Low complexity" evidence="2">
    <location>
        <begin position="949"/>
        <end position="967"/>
    </location>
</feature>
<feature type="modified residue" description="Phosphoserine; by TTBK2" evidence="5">
    <location>
        <position position="781"/>
    </location>
</feature>
<feature type="modified residue" description="Phosphoserine; by TTBK2" evidence="5">
    <location>
        <position position="788"/>
    </location>
</feature>
<feature type="modified residue" description="Phosphoserine" evidence="9">
    <location>
        <position position="994"/>
    </location>
</feature>
<feature type="cross-link" description="Glycyl lysine isopeptide (Lys-Gly) (interchain with G-Cter in ubiquitin)" evidence="5">
    <location>
        <position position="784"/>
    </location>
</feature>
<feature type="splice variant" id="VSP_035838" description="In isoform 2." evidence="7">
    <original>EALEDRLERINRELGSVRMTLKKFHVLRTSANL</original>
    <variation>TPQICEESSHKCAFAGHYVPCHLYDYRFQG</variation>
    <location>
        <begin position="1151"/>
        <end position="1183"/>
    </location>
</feature>
<feature type="sequence variant" id="VAR_047643" description="In dbSNP:rs36121382." evidence="3">
    <original>G</original>
    <variation>S</variation>
    <location>
        <position position="277"/>
    </location>
</feature>
<feature type="sequence variant" id="VAR_047644" description="In dbSNP:rs1260318.">
    <original>A</original>
    <variation>D</variation>
    <location>
        <position position="1078"/>
    </location>
</feature>
<feature type="mutagenesis site" description="Loss of phosphorylation and localization at distal ends of the mother centriole. Significant decrease in ubiquitination; when associated with A-788." evidence="5">
    <original>S</original>
    <variation>A</variation>
    <location>
        <position position="781"/>
    </location>
</feature>
<feature type="mutagenesis site" description="Decreased ubiquitination and increased protein stability." evidence="5">
    <original>K</original>
    <variation>A</variation>
    <location>
        <position position="784"/>
    </location>
</feature>
<feature type="mutagenesis site" description="Reduced phosphorylation. Significant decrease in ubiquitination; when associated with A-781." evidence="5">
    <original>S</original>
    <variation>A</variation>
    <location>
        <position position="788"/>
    </location>
</feature>
<feature type="sequence conflict" description="In Ref. 3; BAB14359." evidence="8" ref="3">
    <original>K</original>
    <variation>E</variation>
    <location>
        <position position="947"/>
    </location>
</feature>
<protein>
    <recommendedName>
        <fullName>M-phase phosphoprotein 9</fullName>
    </recommendedName>
</protein>
<gene>
    <name type="primary">MPHOSPH9</name>
    <name type="synonym">MPP9</name>
</gene>
<dbReference type="EMBL" id="AC073857">
    <property type="status" value="NOT_ANNOTATED_CDS"/>
    <property type="molecule type" value="Genomic_DNA"/>
</dbReference>
<dbReference type="EMBL" id="CH471054">
    <property type="protein sequence ID" value="EAW98392.1"/>
    <property type="molecule type" value="Genomic_DNA"/>
</dbReference>
<dbReference type="EMBL" id="CH471054">
    <property type="protein sequence ID" value="EAW98394.1"/>
    <property type="status" value="ALT_SEQ"/>
    <property type="molecule type" value="Genomic_DNA"/>
</dbReference>
<dbReference type="EMBL" id="AK023016">
    <property type="protein sequence ID" value="BAB14359.1"/>
    <property type="status" value="ALT_INIT"/>
    <property type="molecule type" value="mRNA"/>
</dbReference>
<dbReference type="EMBL" id="AK091181">
    <property type="protein sequence ID" value="BAG52299.1"/>
    <property type="status" value="ALT_INIT"/>
    <property type="molecule type" value="mRNA"/>
</dbReference>
<dbReference type="EMBL" id="BC130440">
    <property type="protein sequence ID" value="AAI30441.1"/>
    <property type="status" value="ALT_INIT"/>
    <property type="molecule type" value="mRNA"/>
</dbReference>
<dbReference type="EMBL" id="X98258">
    <property type="protein sequence ID" value="CAA66911.1"/>
    <property type="molecule type" value="mRNA"/>
</dbReference>
<dbReference type="CCDS" id="CCDS9243.2">
    <molecule id="Q99550-1"/>
</dbReference>
<dbReference type="RefSeq" id="NP_073619.3">
    <molecule id="Q99550-1"/>
    <property type="nucleotide sequence ID" value="NM_022782.3"/>
</dbReference>
<dbReference type="RefSeq" id="XP_016874162.1">
    <molecule id="Q99550-1"/>
    <property type="nucleotide sequence ID" value="XM_017018673.2"/>
</dbReference>
<dbReference type="RefSeq" id="XP_016874168.1">
    <property type="nucleotide sequence ID" value="XM_017018679.1"/>
</dbReference>
<dbReference type="RefSeq" id="XP_016874169.1">
    <property type="nucleotide sequence ID" value="XM_017018680.1"/>
</dbReference>
<dbReference type="RefSeq" id="XP_047284011.1">
    <molecule id="Q99550-1"/>
    <property type="nucleotide sequence ID" value="XM_047428055.1"/>
</dbReference>
<dbReference type="RefSeq" id="XP_047284012.1">
    <molecule id="Q99550-1"/>
    <property type="nucleotide sequence ID" value="XM_047428056.1"/>
</dbReference>
<dbReference type="RefSeq" id="XP_054226709.1">
    <molecule id="Q99550-1"/>
    <property type="nucleotide sequence ID" value="XM_054370734.1"/>
</dbReference>
<dbReference type="RefSeq" id="XP_054226710.1">
    <molecule id="Q99550-1"/>
    <property type="nucleotide sequence ID" value="XM_054370735.1"/>
</dbReference>
<dbReference type="RefSeq" id="XP_054226711.1">
    <molecule id="Q99550-1"/>
    <property type="nucleotide sequence ID" value="XM_054370736.1"/>
</dbReference>
<dbReference type="SMR" id="Q99550"/>
<dbReference type="BioGRID" id="115493">
    <property type="interactions" value="102"/>
</dbReference>
<dbReference type="FunCoup" id="Q99550">
    <property type="interactions" value="1027"/>
</dbReference>
<dbReference type="IntAct" id="Q99550">
    <property type="interactions" value="57"/>
</dbReference>
<dbReference type="MINT" id="Q99550"/>
<dbReference type="STRING" id="9606.ENSP00000475489"/>
<dbReference type="GlyGen" id="Q99550">
    <property type="glycosylation" value="3 sites, 1 N-linked glycan (1 site), 1 O-linked glycan (2 sites)"/>
</dbReference>
<dbReference type="iPTMnet" id="Q99550"/>
<dbReference type="PhosphoSitePlus" id="Q99550"/>
<dbReference type="BioMuta" id="MPHOSPH9"/>
<dbReference type="DMDM" id="215274134"/>
<dbReference type="jPOST" id="Q99550"/>
<dbReference type="MassIVE" id="Q99550"/>
<dbReference type="PaxDb" id="9606-ENSP00000475489"/>
<dbReference type="PeptideAtlas" id="Q99550"/>
<dbReference type="ProteomicsDB" id="78323">
    <molecule id="Q99550-1"/>
</dbReference>
<dbReference type="ProteomicsDB" id="78324">
    <molecule id="Q99550-2"/>
</dbReference>
<dbReference type="Antibodypedia" id="31757">
    <property type="antibodies" value="169 antibodies from 25 providers"/>
</dbReference>
<dbReference type="DNASU" id="10198"/>
<dbReference type="Ensembl" id="ENST00000606320.6">
    <molecule id="Q99550-1"/>
    <property type="protein sequence ID" value="ENSP00000475489.1"/>
    <property type="gene ID" value="ENSG00000051825.15"/>
</dbReference>
<dbReference type="GeneID" id="10198"/>
<dbReference type="KEGG" id="hsa:10198"/>
<dbReference type="MANE-Select" id="ENST00000606320.6">
    <property type="protein sequence ID" value="ENSP00000475489.1"/>
    <property type="RefSeq nucleotide sequence ID" value="NM_022782.4"/>
    <property type="RefSeq protein sequence ID" value="NP_073619.3"/>
</dbReference>
<dbReference type="UCSC" id="uc001uel.5">
    <molecule id="Q99550-1"/>
    <property type="organism name" value="human"/>
</dbReference>
<dbReference type="UCSC" id="uc058uri.1">
    <property type="organism name" value="human"/>
</dbReference>
<dbReference type="AGR" id="HGNC:7215"/>
<dbReference type="CTD" id="10198"/>
<dbReference type="DisGeNET" id="10198"/>
<dbReference type="GeneCards" id="MPHOSPH9"/>
<dbReference type="HGNC" id="HGNC:7215">
    <property type="gene designation" value="MPHOSPH9"/>
</dbReference>
<dbReference type="HPA" id="ENSG00000051825">
    <property type="expression patterns" value="Tissue enhanced (lymphoid)"/>
</dbReference>
<dbReference type="MIM" id="605501">
    <property type="type" value="gene"/>
</dbReference>
<dbReference type="neXtProt" id="NX_Q99550"/>
<dbReference type="OpenTargets" id="ENSG00000051825"/>
<dbReference type="PharmGKB" id="PA30921"/>
<dbReference type="VEuPathDB" id="HostDB:ENSG00000051825"/>
<dbReference type="eggNOG" id="KOG4713">
    <property type="taxonomic scope" value="Eukaryota"/>
</dbReference>
<dbReference type="GeneTree" id="ENSGT00500000044984"/>
<dbReference type="HOGENOM" id="CLU_008784_0_0_1"/>
<dbReference type="InParanoid" id="Q99550"/>
<dbReference type="OMA" id="DEGPNSW"/>
<dbReference type="OrthoDB" id="6288856at2759"/>
<dbReference type="PAN-GO" id="Q99550">
    <property type="GO annotations" value="1 GO annotation based on evolutionary models"/>
</dbReference>
<dbReference type="PhylomeDB" id="Q99550"/>
<dbReference type="TreeFam" id="TF336168"/>
<dbReference type="PathwayCommons" id="Q99550"/>
<dbReference type="SignaLink" id="Q99550"/>
<dbReference type="SIGNOR" id="Q99550"/>
<dbReference type="BioGRID-ORCS" id="10198">
    <property type="hits" value="4 hits in 1012 CRISPR screens"/>
</dbReference>
<dbReference type="ChiTaRS" id="MPHOSPH9">
    <property type="organism name" value="human"/>
</dbReference>
<dbReference type="GenomeRNAi" id="10198"/>
<dbReference type="Pharos" id="Q99550">
    <property type="development level" value="Tbio"/>
</dbReference>
<dbReference type="PRO" id="PR:Q99550"/>
<dbReference type="Proteomes" id="UP000005640">
    <property type="component" value="Chromosome 12"/>
</dbReference>
<dbReference type="RNAct" id="Q99550">
    <property type="molecule type" value="protein"/>
</dbReference>
<dbReference type="Bgee" id="ENSG00000051825">
    <property type="expression patterns" value="Expressed in ventricular zone and 156 other cell types or tissues"/>
</dbReference>
<dbReference type="ExpressionAtlas" id="Q99550">
    <property type="expression patterns" value="baseline and differential"/>
</dbReference>
<dbReference type="GO" id="GO:0005814">
    <property type="term" value="C:centriole"/>
    <property type="evidence" value="ECO:0000314"/>
    <property type="project" value="UniProtKB"/>
</dbReference>
<dbReference type="GO" id="GO:0005813">
    <property type="term" value="C:centrosome"/>
    <property type="evidence" value="ECO:0000314"/>
    <property type="project" value="UniProtKB"/>
</dbReference>
<dbReference type="GO" id="GO:0005794">
    <property type="term" value="C:Golgi apparatus"/>
    <property type="evidence" value="ECO:0000314"/>
    <property type="project" value="UniProtKB"/>
</dbReference>
<dbReference type="GO" id="GO:0000139">
    <property type="term" value="C:Golgi membrane"/>
    <property type="evidence" value="ECO:0007669"/>
    <property type="project" value="UniProtKB-SubCell"/>
</dbReference>
<dbReference type="GO" id="GO:0016020">
    <property type="term" value="C:membrane"/>
    <property type="evidence" value="ECO:0007005"/>
    <property type="project" value="UniProtKB"/>
</dbReference>
<dbReference type="GO" id="GO:1902018">
    <property type="term" value="P:negative regulation of cilium assembly"/>
    <property type="evidence" value="ECO:0000315"/>
    <property type="project" value="UniProtKB"/>
</dbReference>
<dbReference type="InterPro" id="IPR026636">
    <property type="entry name" value="MPHOSPH9"/>
</dbReference>
<dbReference type="PANTHER" id="PTHR14926">
    <property type="entry name" value="M-PHASE PHOSPHOPROTEIN 9"/>
    <property type="match status" value="1"/>
</dbReference>
<dbReference type="PANTHER" id="PTHR14926:SF1">
    <property type="entry name" value="M-PHASE PHOSPHOPROTEIN 9"/>
    <property type="match status" value="1"/>
</dbReference>
<accession>Q99550</accession>
<accession>A0A0A0MTP3</accession>
<accession>A1L486</accession>
<accession>A6NEE2</accession>
<accession>B3KR87</accession>
<accession>Q9H976</accession>
<accession>U3KQ28</accession>
<comment type="function">
    <text evidence="5">Negatively regulates cilia formation by recruiting the CP110-CEP97 complex (a negative regulator of ciliogenesis) at the distal end of the mother centriole in ciliary cells (PubMed:30375385). At the beginning of cilia formation, MPHOSPH9 undergoes TTBK2-mediated phosphorylation and degradation via the ubiquitin-proteasome system and removes itself and the CP110-CEP97 complex from the distal end of the mother centriole, which subsequently promotes cilia formation (PubMed:30375385).</text>
</comment>
<comment type="subunit">
    <text evidence="5">Interacts with CCP110, CEP97 and KIF24.</text>
</comment>
<comment type="interaction">
    <interactant intactId="EBI-2511359">
        <id>Q99550</id>
    </interactant>
    <interactant intactId="EBI-359832">
        <id>P61981</id>
        <label>YWHAG</label>
    </interactant>
    <organismsDiffer>false</organismsDiffer>
    <experiments>4</experiments>
</comment>
<comment type="subcellular location">
    <subcellularLocation>
        <location evidence="4 5">Cytoplasm</location>
        <location evidence="4 5">Cytoskeleton</location>
        <location evidence="4 5">Microtubule organizing center</location>
        <location evidence="4 5">Centrosome</location>
        <location evidence="4 5">Centriole</location>
    </subcellularLocation>
    <subcellularLocation>
        <location evidence="8">Golgi apparatus membrane</location>
        <topology evidence="8">Peripheral membrane protein</topology>
    </subcellularLocation>
    <subcellularLocation>
        <location evidence="5">Cytoplasm</location>
        <location evidence="5">Cytoskeleton</location>
        <location evidence="5">Microtubule organizing center</location>
        <location evidence="5">Centrosome</location>
    </subcellularLocation>
    <text evidence="4 5">Localizes to the distal and proximal end of centriole pairs in duplicated centrosomes. In ciliated cells, localizes to the distal and proximal end of daughter centriole and proximal of the mother centriole but not in the distal end of the mother centriole (PubMed:21399614). Recruited by KIF24 to the distal end of mother centriole where it forms a ring-like structure (PubMed:30375385).</text>
</comment>
<comment type="alternative products">
    <event type="alternative splicing"/>
    <isoform>
        <id>Q99550-1</id>
        <name>1</name>
        <sequence type="displayed"/>
    </isoform>
    <isoform>
        <id>Q99550-2</id>
        <name>2</name>
        <sequence type="described" ref="VSP_035838"/>
    </isoform>
</comment>
<comment type="PTM">
    <text evidence="5 6">TTBK2-mediated phosphorylation at Ser-781 and Ser-788, promotes its ubiquitination at Lys-784 leading to proteasomal degradation, loss of MPHOSPH9 facilitates the removal of the CP110-CEP97 complex from the mother centrioles, promoting the initiation of ciliogenesis (PubMed:30375385). Phosphorylated in M (mitotic) phase (PubMed:8885239).</text>
</comment>
<comment type="PTM">
    <text evidence="5">Ubiquitinated at Lys-784, leading to proteasomal degradation.</text>
</comment>
<comment type="sequence caution" evidence="8">
    <conflict type="erroneous initiation">
        <sequence resource="EMBL-CDS" id="AAI30441"/>
    </conflict>
    <text>Truncated N-terminus.</text>
</comment>
<comment type="sequence caution" evidence="8">
    <conflict type="erroneous initiation">
        <sequence resource="EMBL-CDS" id="BAB14359"/>
    </conflict>
    <text>Truncated N-terminus.</text>
</comment>
<comment type="sequence caution" evidence="8">
    <conflict type="erroneous initiation">
        <sequence resource="EMBL-CDS" id="BAG52299"/>
    </conflict>
    <text>Truncated N-terminus.</text>
</comment>
<comment type="sequence caution" evidence="8">
    <conflict type="erroneous gene model prediction">
        <sequence resource="EMBL-CDS" id="EAW98394"/>
    </conflict>
</comment>
<reference key="1">
    <citation type="journal article" date="2006" name="Nature">
        <title>The finished DNA sequence of human chromosome 12.</title>
        <authorList>
            <person name="Scherer S.E."/>
            <person name="Muzny D.M."/>
            <person name="Buhay C.J."/>
            <person name="Chen R."/>
            <person name="Cree A."/>
            <person name="Ding Y."/>
            <person name="Dugan-Rocha S."/>
            <person name="Gill R."/>
            <person name="Gunaratne P."/>
            <person name="Harris R.A."/>
            <person name="Hawes A.C."/>
            <person name="Hernandez J."/>
            <person name="Hodgson A.V."/>
            <person name="Hume J."/>
            <person name="Jackson A."/>
            <person name="Khan Z.M."/>
            <person name="Kovar-Smith C."/>
            <person name="Lewis L.R."/>
            <person name="Lozado R.J."/>
            <person name="Metzker M.L."/>
            <person name="Milosavljevic A."/>
            <person name="Miner G.R."/>
            <person name="Montgomery K.T."/>
            <person name="Morgan M.B."/>
            <person name="Nazareth L.V."/>
            <person name="Scott G."/>
            <person name="Sodergren E."/>
            <person name="Song X.-Z."/>
            <person name="Steffen D."/>
            <person name="Lovering R.C."/>
            <person name="Wheeler D.A."/>
            <person name="Worley K.C."/>
            <person name="Yuan Y."/>
            <person name="Zhang Z."/>
            <person name="Adams C.Q."/>
            <person name="Ansari-Lari M.A."/>
            <person name="Ayele M."/>
            <person name="Brown M.J."/>
            <person name="Chen G."/>
            <person name="Chen Z."/>
            <person name="Clerc-Blankenburg K.P."/>
            <person name="Davis C."/>
            <person name="Delgado O."/>
            <person name="Dinh H.H."/>
            <person name="Draper H."/>
            <person name="Gonzalez-Garay M.L."/>
            <person name="Havlak P."/>
            <person name="Jackson L.R."/>
            <person name="Jacob L.S."/>
            <person name="Kelly S.H."/>
            <person name="Li L."/>
            <person name="Li Z."/>
            <person name="Liu J."/>
            <person name="Liu W."/>
            <person name="Lu J."/>
            <person name="Maheshwari M."/>
            <person name="Nguyen B.-V."/>
            <person name="Okwuonu G.O."/>
            <person name="Pasternak S."/>
            <person name="Perez L.M."/>
            <person name="Plopper F.J.H."/>
            <person name="Santibanez J."/>
            <person name="Shen H."/>
            <person name="Tabor P.E."/>
            <person name="Verduzco D."/>
            <person name="Waldron L."/>
            <person name="Wang Q."/>
            <person name="Williams G.A."/>
            <person name="Zhang J."/>
            <person name="Zhou J."/>
            <person name="Allen C.C."/>
            <person name="Amin A.G."/>
            <person name="Anyalebechi V."/>
            <person name="Bailey M."/>
            <person name="Barbaria J.A."/>
            <person name="Bimage K.E."/>
            <person name="Bryant N.P."/>
            <person name="Burch P.E."/>
            <person name="Burkett C.E."/>
            <person name="Burrell K.L."/>
            <person name="Calderon E."/>
            <person name="Cardenas V."/>
            <person name="Carter K."/>
            <person name="Casias K."/>
            <person name="Cavazos I."/>
            <person name="Cavazos S.R."/>
            <person name="Ceasar H."/>
            <person name="Chacko J."/>
            <person name="Chan S.N."/>
            <person name="Chavez D."/>
            <person name="Christopoulos C."/>
            <person name="Chu J."/>
            <person name="Cockrell R."/>
            <person name="Cox C.D."/>
            <person name="Dang M."/>
            <person name="Dathorne S.R."/>
            <person name="David R."/>
            <person name="Davis C.M."/>
            <person name="Davy-Carroll L."/>
            <person name="Deshazo D.R."/>
            <person name="Donlin J.E."/>
            <person name="D'Souza L."/>
            <person name="Eaves K.A."/>
            <person name="Egan A."/>
            <person name="Emery-Cohen A.J."/>
            <person name="Escotto M."/>
            <person name="Flagg N."/>
            <person name="Forbes L.D."/>
            <person name="Gabisi A.M."/>
            <person name="Garza M."/>
            <person name="Hamilton C."/>
            <person name="Henderson N."/>
            <person name="Hernandez O."/>
            <person name="Hines S."/>
            <person name="Hogues M.E."/>
            <person name="Huang M."/>
            <person name="Idlebird D.G."/>
            <person name="Johnson R."/>
            <person name="Jolivet A."/>
            <person name="Jones S."/>
            <person name="Kagan R."/>
            <person name="King L.M."/>
            <person name="Leal B."/>
            <person name="Lebow H."/>
            <person name="Lee S."/>
            <person name="LeVan J.M."/>
            <person name="Lewis L.C."/>
            <person name="London P."/>
            <person name="Lorensuhewa L.M."/>
            <person name="Loulseged H."/>
            <person name="Lovett D.A."/>
            <person name="Lucier A."/>
            <person name="Lucier R.L."/>
            <person name="Ma J."/>
            <person name="Madu R.C."/>
            <person name="Mapua P."/>
            <person name="Martindale A.D."/>
            <person name="Martinez E."/>
            <person name="Massey E."/>
            <person name="Mawhiney S."/>
            <person name="Meador M.G."/>
            <person name="Mendez S."/>
            <person name="Mercado C."/>
            <person name="Mercado I.C."/>
            <person name="Merritt C.E."/>
            <person name="Miner Z.L."/>
            <person name="Minja E."/>
            <person name="Mitchell T."/>
            <person name="Mohabbat F."/>
            <person name="Mohabbat K."/>
            <person name="Montgomery B."/>
            <person name="Moore N."/>
            <person name="Morris S."/>
            <person name="Munidasa M."/>
            <person name="Ngo R.N."/>
            <person name="Nguyen N.B."/>
            <person name="Nickerson E."/>
            <person name="Nwaokelemeh O.O."/>
            <person name="Nwokenkwo S."/>
            <person name="Obregon M."/>
            <person name="Oguh M."/>
            <person name="Oragunye N."/>
            <person name="Oviedo R.J."/>
            <person name="Parish B.J."/>
            <person name="Parker D.N."/>
            <person name="Parrish J."/>
            <person name="Parks K.L."/>
            <person name="Paul H.A."/>
            <person name="Payton B.A."/>
            <person name="Perez A."/>
            <person name="Perrin W."/>
            <person name="Pickens A."/>
            <person name="Primus E.L."/>
            <person name="Pu L.-L."/>
            <person name="Puazo M."/>
            <person name="Quiles M.M."/>
            <person name="Quiroz J.B."/>
            <person name="Rabata D."/>
            <person name="Reeves K."/>
            <person name="Ruiz S.J."/>
            <person name="Shao H."/>
            <person name="Sisson I."/>
            <person name="Sonaike T."/>
            <person name="Sorelle R.P."/>
            <person name="Sutton A.E."/>
            <person name="Svatek A.F."/>
            <person name="Svetz L.A."/>
            <person name="Tamerisa K.S."/>
            <person name="Taylor T.R."/>
            <person name="Teague B."/>
            <person name="Thomas N."/>
            <person name="Thorn R.D."/>
            <person name="Trejos Z.Y."/>
            <person name="Trevino B.K."/>
            <person name="Ukegbu O.N."/>
            <person name="Urban J.B."/>
            <person name="Vasquez L.I."/>
            <person name="Vera V.A."/>
            <person name="Villasana D.M."/>
            <person name="Wang L."/>
            <person name="Ward-Moore S."/>
            <person name="Warren J.T."/>
            <person name="Wei X."/>
            <person name="White F."/>
            <person name="Williamson A.L."/>
            <person name="Wleczyk R."/>
            <person name="Wooden H.S."/>
            <person name="Wooden S.H."/>
            <person name="Yen J."/>
            <person name="Yoon L."/>
            <person name="Yoon V."/>
            <person name="Zorrilla S.E."/>
            <person name="Nelson D."/>
            <person name="Kucherlapati R."/>
            <person name="Weinstock G."/>
            <person name="Gibbs R.A."/>
        </authorList>
    </citation>
    <scope>NUCLEOTIDE SEQUENCE [LARGE SCALE GENOMIC DNA]</scope>
</reference>
<reference key="2">
    <citation type="submission" date="2005-07" db="EMBL/GenBank/DDBJ databases">
        <authorList>
            <person name="Mural R.J."/>
            <person name="Istrail S."/>
            <person name="Sutton G.G."/>
            <person name="Florea L."/>
            <person name="Halpern A.L."/>
            <person name="Mobarry C.M."/>
            <person name="Lippert R."/>
            <person name="Walenz B."/>
            <person name="Shatkay H."/>
            <person name="Dew I."/>
            <person name="Miller J.R."/>
            <person name="Flanigan M.J."/>
            <person name="Edwards N.J."/>
            <person name="Bolanos R."/>
            <person name="Fasulo D."/>
            <person name="Halldorsson B.V."/>
            <person name="Hannenhalli S."/>
            <person name="Turner R."/>
            <person name="Yooseph S."/>
            <person name="Lu F."/>
            <person name="Nusskern D.R."/>
            <person name="Shue B.C."/>
            <person name="Zheng X.H."/>
            <person name="Zhong F."/>
            <person name="Delcher A.L."/>
            <person name="Huson D.H."/>
            <person name="Kravitz S.A."/>
            <person name="Mouchard L."/>
            <person name="Reinert K."/>
            <person name="Remington K.A."/>
            <person name="Clark A.G."/>
            <person name="Waterman M.S."/>
            <person name="Eichler E.E."/>
            <person name="Adams M.D."/>
            <person name="Hunkapiller M.W."/>
            <person name="Myers E.W."/>
            <person name="Venter J.C."/>
        </authorList>
    </citation>
    <scope>NUCLEOTIDE SEQUENCE [LARGE SCALE GENOMIC DNA]</scope>
</reference>
<reference key="3">
    <citation type="journal article" date="2004" name="Nat. Genet.">
        <title>Complete sequencing and characterization of 21,243 full-length human cDNAs.</title>
        <authorList>
            <person name="Ota T."/>
            <person name="Suzuki Y."/>
            <person name="Nishikawa T."/>
            <person name="Otsuki T."/>
            <person name="Sugiyama T."/>
            <person name="Irie R."/>
            <person name="Wakamatsu A."/>
            <person name="Hayashi K."/>
            <person name="Sato H."/>
            <person name="Nagai K."/>
            <person name="Kimura K."/>
            <person name="Makita H."/>
            <person name="Sekine M."/>
            <person name="Obayashi M."/>
            <person name="Nishi T."/>
            <person name="Shibahara T."/>
            <person name="Tanaka T."/>
            <person name="Ishii S."/>
            <person name="Yamamoto J."/>
            <person name="Saito K."/>
            <person name="Kawai Y."/>
            <person name="Isono Y."/>
            <person name="Nakamura Y."/>
            <person name="Nagahari K."/>
            <person name="Murakami K."/>
            <person name="Yasuda T."/>
            <person name="Iwayanagi T."/>
            <person name="Wagatsuma M."/>
            <person name="Shiratori A."/>
            <person name="Sudo H."/>
            <person name="Hosoiri T."/>
            <person name="Kaku Y."/>
            <person name="Kodaira H."/>
            <person name="Kondo H."/>
            <person name="Sugawara M."/>
            <person name="Takahashi M."/>
            <person name="Kanda K."/>
            <person name="Yokoi T."/>
            <person name="Furuya T."/>
            <person name="Kikkawa E."/>
            <person name="Omura Y."/>
            <person name="Abe K."/>
            <person name="Kamihara K."/>
            <person name="Katsuta N."/>
            <person name="Sato K."/>
            <person name="Tanikawa M."/>
            <person name="Yamazaki M."/>
            <person name="Ninomiya K."/>
            <person name="Ishibashi T."/>
            <person name="Yamashita H."/>
            <person name="Murakawa K."/>
            <person name="Fujimori K."/>
            <person name="Tanai H."/>
            <person name="Kimata M."/>
            <person name="Watanabe M."/>
            <person name="Hiraoka S."/>
            <person name="Chiba Y."/>
            <person name="Ishida S."/>
            <person name="Ono Y."/>
            <person name="Takiguchi S."/>
            <person name="Watanabe S."/>
            <person name="Yosida M."/>
            <person name="Hotuta T."/>
            <person name="Kusano J."/>
            <person name="Kanehori K."/>
            <person name="Takahashi-Fujii A."/>
            <person name="Hara H."/>
            <person name="Tanase T.-O."/>
            <person name="Nomura Y."/>
            <person name="Togiya S."/>
            <person name="Komai F."/>
            <person name="Hara R."/>
            <person name="Takeuchi K."/>
            <person name="Arita M."/>
            <person name="Imose N."/>
            <person name="Musashino K."/>
            <person name="Yuuki H."/>
            <person name="Oshima A."/>
            <person name="Sasaki N."/>
            <person name="Aotsuka S."/>
            <person name="Yoshikawa Y."/>
            <person name="Matsunawa H."/>
            <person name="Ichihara T."/>
            <person name="Shiohata N."/>
            <person name="Sano S."/>
            <person name="Moriya S."/>
            <person name="Momiyama H."/>
            <person name="Satoh N."/>
            <person name="Takami S."/>
            <person name="Terashima Y."/>
            <person name="Suzuki O."/>
            <person name="Nakagawa S."/>
            <person name="Senoh A."/>
            <person name="Mizoguchi H."/>
            <person name="Goto Y."/>
            <person name="Shimizu F."/>
            <person name="Wakebe H."/>
            <person name="Hishigaki H."/>
            <person name="Watanabe T."/>
            <person name="Sugiyama A."/>
            <person name="Takemoto M."/>
            <person name="Kawakami B."/>
            <person name="Yamazaki M."/>
            <person name="Watanabe K."/>
            <person name="Kumagai A."/>
            <person name="Itakura S."/>
            <person name="Fukuzumi Y."/>
            <person name="Fujimori Y."/>
            <person name="Komiyama M."/>
            <person name="Tashiro H."/>
            <person name="Tanigami A."/>
            <person name="Fujiwara T."/>
            <person name="Ono T."/>
            <person name="Yamada K."/>
            <person name="Fujii Y."/>
            <person name="Ozaki K."/>
            <person name="Hirao M."/>
            <person name="Ohmori Y."/>
            <person name="Kawabata A."/>
            <person name="Hikiji T."/>
            <person name="Kobatake N."/>
            <person name="Inagaki H."/>
            <person name="Ikema Y."/>
            <person name="Okamoto S."/>
            <person name="Okitani R."/>
            <person name="Kawakami T."/>
            <person name="Noguchi S."/>
            <person name="Itoh T."/>
            <person name="Shigeta K."/>
            <person name="Senba T."/>
            <person name="Matsumura K."/>
            <person name="Nakajima Y."/>
            <person name="Mizuno T."/>
            <person name="Morinaga M."/>
            <person name="Sasaki M."/>
            <person name="Togashi T."/>
            <person name="Oyama M."/>
            <person name="Hata H."/>
            <person name="Watanabe M."/>
            <person name="Komatsu T."/>
            <person name="Mizushima-Sugano J."/>
            <person name="Satoh T."/>
            <person name="Shirai Y."/>
            <person name="Takahashi Y."/>
            <person name="Nakagawa K."/>
            <person name="Okumura K."/>
            <person name="Nagase T."/>
            <person name="Nomura N."/>
            <person name="Kikuchi H."/>
            <person name="Masuho Y."/>
            <person name="Yamashita R."/>
            <person name="Nakai K."/>
            <person name="Yada T."/>
            <person name="Nakamura Y."/>
            <person name="Ohara O."/>
            <person name="Isogai T."/>
            <person name="Sugano S."/>
        </authorList>
    </citation>
    <scope>NUCLEOTIDE SEQUENCE [LARGE SCALE MRNA] OF 118-1183 (ISOFORM 1)</scope>
    <scope>VARIANT SER-277</scope>
    <source>
        <tissue>Tongue</tissue>
    </source>
</reference>
<reference key="4">
    <citation type="journal article" date="2004" name="Genome Res.">
        <title>The status, quality, and expansion of the NIH full-length cDNA project: the Mammalian Gene Collection (MGC).</title>
        <authorList>
            <consortium name="The MGC Project Team"/>
        </authorList>
    </citation>
    <scope>NUCLEOTIDE SEQUENCE [LARGE SCALE MRNA] OF 133-1183 (ISOFORM 1)</scope>
</reference>
<reference key="5">
    <citation type="journal article" date="1996" name="Mol. Biol. Cell">
        <title>Identification of novel M phase phosphoproteins by expression cloning.</title>
        <authorList>
            <person name="Matsumoto-Taniura N."/>
            <person name="Pirollet F."/>
            <person name="Monroe R."/>
            <person name="Gerace L."/>
            <person name="Westendorf J.M."/>
        </authorList>
    </citation>
    <scope>NUCLEOTIDE SEQUENCE [MRNA] OF 967-1183 (ISOFORM 2)</scope>
    <scope>SUBCELLULAR LOCATION</scope>
    <scope>PHOSPHORYLATION</scope>
    <source>
        <tissue>Lymphoblast</tissue>
    </source>
</reference>
<reference key="6">
    <citation type="journal article" date="2009" name="Sci. Signal.">
        <title>Quantitative phosphoproteomic analysis of T cell receptor signaling reveals system-wide modulation of protein-protein interactions.</title>
        <authorList>
            <person name="Mayya V."/>
            <person name="Lundgren D.H."/>
            <person name="Hwang S.-I."/>
            <person name="Rezaul K."/>
            <person name="Wu L."/>
            <person name="Eng J.K."/>
            <person name="Rodionov V."/>
            <person name="Han D.K."/>
        </authorList>
    </citation>
    <scope>IDENTIFICATION BY MASS SPECTROMETRY [LARGE SCALE ANALYSIS]</scope>
    <source>
        <tissue>Leukemic T-cell</tissue>
    </source>
</reference>
<reference key="7">
    <citation type="journal article" date="2010" name="Sci. Signal.">
        <title>Quantitative phosphoproteomics reveals widespread full phosphorylation site occupancy during mitosis.</title>
        <authorList>
            <person name="Olsen J.V."/>
            <person name="Vermeulen M."/>
            <person name="Santamaria A."/>
            <person name="Kumar C."/>
            <person name="Miller M.L."/>
            <person name="Jensen L.J."/>
            <person name="Gnad F."/>
            <person name="Cox J."/>
            <person name="Jensen T.S."/>
            <person name="Nigg E.A."/>
            <person name="Brunak S."/>
            <person name="Mann M."/>
        </authorList>
    </citation>
    <scope>IDENTIFICATION BY MASS SPECTROMETRY [LARGE SCALE ANALYSIS]</scope>
    <source>
        <tissue>Cervix carcinoma</tissue>
    </source>
</reference>
<reference key="8">
    <citation type="journal article" date="2011" name="EMBO J.">
        <title>Novel asymmetrically localizing components of human centrosomes identified by complementary proteomics methods.</title>
        <authorList>
            <person name="Jakobsen L."/>
            <person name="Vanselow K."/>
            <person name="Skogs M."/>
            <person name="Toyoda Y."/>
            <person name="Lundberg E."/>
            <person name="Poser I."/>
            <person name="Falkenby L.G."/>
            <person name="Bennetzen M."/>
            <person name="Westendorf J."/>
            <person name="Nigg E.A."/>
            <person name="Uhlen M."/>
            <person name="Hyman A.A."/>
            <person name="Andersen J.S."/>
        </authorList>
    </citation>
    <scope>IDENTIFICATION BY MASS SPECTROMETRY</scope>
    <scope>SUBCELLULAR LOCATION</scope>
</reference>
<reference key="9">
    <citation type="journal article" date="2013" name="J. Proteome Res.">
        <title>Toward a comprehensive characterization of a human cancer cell phosphoproteome.</title>
        <authorList>
            <person name="Zhou H."/>
            <person name="Di Palma S."/>
            <person name="Preisinger C."/>
            <person name="Peng M."/>
            <person name="Polat A.N."/>
            <person name="Heck A.J."/>
            <person name="Mohammed S."/>
        </authorList>
    </citation>
    <scope>PHOSPHORYLATION [LARGE SCALE ANALYSIS] AT SER-994</scope>
    <scope>IDENTIFICATION BY MASS SPECTROMETRY [LARGE SCALE ANALYSIS]</scope>
    <source>
        <tissue>Cervix carcinoma</tissue>
        <tissue>Erythroleukemia</tissue>
    </source>
</reference>
<reference key="10">
    <citation type="journal article" date="2018" name="Nat. Commun.">
        <title>M-Phase Phosphoprotein 9 regulates ciliogenesis by modulating CP110-CEP97 complex localization at the mother centriole.</title>
        <authorList>
            <person name="Huang N."/>
            <person name="Zhang D."/>
            <person name="Li F."/>
            <person name="Chai P."/>
            <person name="Wang S."/>
            <person name="Teng J."/>
            <person name="Chen J."/>
        </authorList>
    </citation>
    <scope>FUNCTION</scope>
    <scope>SUBCELLULAR LOCATION</scope>
    <scope>INTERACTION WITH CCP110; CEP97 AND KIF24</scope>
    <scope>PHOSPHORYLATION AT SER-781 AND SER-788</scope>
    <scope>UBIQUITINATION AT LYS-784</scope>
    <scope>MUTAGENESIS OF SER-781; LYS-784 AND SER-788</scope>
</reference>
<name>MPP9_HUMAN</name>